<feature type="peptide" id="PRO_0000043526" description="Brevinin-1Ba">
    <location>
        <begin position="1"/>
        <end position="24"/>
    </location>
</feature>
<feature type="disulfide bond" evidence="1">
    <location>
        <begin position="18"/>
        <end position="24"/>
    </location>
</feature>
<proteinExistence type="evidence at protein level"/>
<accession>P82833</accession>
<protein>
    <recommendedName>
        <fullName>Brevinin-1Ba</fullName>
    </recommendedName>
</protein>
<organism>
    <name type="scientific">Lithobates berlandieri</name>
    <name type="common">Rio Grande leopard frog</name>
    <name type="synonym">Rana berlandieri</name>
    <dbReference type="NCBI Taxonomy" id="30360"/>
    <lineage>
        <taxon>Eukaryota</taxon>
        <taxon>Metazoa</taxon>
        <taxon>Chordata</taxon>
        <taxon>Craniata</taxon>
        <taxon>Vertebrata</taxon>
        <taxon>Euteleostomi</taxon>
        <taxon>Amphibia</taxon>
        <taxon>Batrachia</taxon>
        <taxon>Anura</taxon>
        <taxon>Neobatrachia</taxon>
        <taxon>Ranoidea</taxon>
        <taxon>Ranidae</taxon>
        <taxon>Lithobates</taxon>
    </lineage>
</organism>
<reference key="1">
    <citation type="journal article" date="2000" name="Eur. J. Biochem.">
        <title>Peptides with antimicrobial activity from four different families isolated from the skins of the North American frogs Rana luteiventris, Rana berlandieri and Rana pipiens.</title>
        <authorList>
            <person name="Goraya J."/>
            <person name="Wang Y."/>
            <person name="Li Z."/>
            <person name="O'Flaherty M."/>
            <person name="Knoop F.C."/>
            <person name="Platz J.E."/>
            <person name="Conlon J.M."/>
        </authorList>
    </citation>
    <scope>PROTEIN SEQUENCE</scope>
    <scope>FUNCTION</scope>
    <scope>MASS SPECTROMETRY</scope>
    <source>
        <tissue>Skin secretion</tissue>
    </source>
</reference>
<name>BR1A_LITBE</name>
<comment type="function">
    <text evidence="2">Antibacterial activity against Gram-positive bacterium S.aureus.</text>
</comment>
<comment type="subcellular location">
    <subcellularLocation>
        <location>Secreted</location>
    </subcellularLocation>
</comment>
<comment type="tissue specificity">
    <text>Expressed by the skin glands.</text>
</comment>
<comment type="mass spectrometry"/>
<comment type="similarity">
    <text evidence="3">Belongs to the frog skin active peptide (FSAP) family. Brevinin subfamily.</text>
</comment>
<sequence>FLPFIAGMAAKFLPKIFCAISKKC</sequence>
<keyword id="KW-0878">Amphibian defense peptide</keyword>
<keyword id="KW-0044">Antibiotic</keyword>
<keyword id="KW-0929">Antimicrobial</keyword>
<keyword id="KW-0903">Direct protein sequencing</keyword>
<keyword id="KW-1015">Disulfide bond</keyword>
<keyword id="KW-0964">Secreted</keyword>
<dbReference type="GO" id="GO:0005576">
    <property type="term" value="C:extracellular region"/>
    <property type="evidence" value="ECO:0007669"/>
    <property type="project" value="UniProtKB-SubCell"/>
</dbReference>
<dbReference type="GO" id="GO:0042742">
    <property type="term" value="P:defense response to bacterium"/>
    <property type="evidence" value="ECO:0007669"/>
    <property type="project" value="UniProtKB-KW"/>
</dbReference>
<dbReference type="InterPro" id="IPR012520">
    <property type="entry name" value="Antimicrobial_frog_1"/>
</dbReference>
<dbReference type="Pfam" id="PF08018">
    <property type="entry name" value="Antimicrobial_1"/>
    <property type="match status" value="1"/>
</dbReference>
<evidence type="ECO:0000250" key="1"/>
<evidence type="ECO:0000269" key="2">
    <source>
    </source>
</evidence>
<evidence type="ECO:0000305" key="3"/>